<sequence length="356" mass="38296">MGPASEVYGRKLPFFLGYVLFVLSQIPVALGHDAPTVLVFRFLGGVTSSVCPAITGGWLADFLLPAERGVAVAIFAATTLVGPSIGAITSQVQLQTAMGWRMTAWTTMILGIVSGVAGFIILPETYLPVVEQRHARKLRQETKDWALHSRLDEKPVSIREFLTKYLTLPISMLVSEPILLSMTIYISFTFGLIYLLFVAYPVSFVQERGYGAIDGTLPLLSICAGIIVGAFYASWSTLTTVKQKAASGNALVPEDRLHPMIVGAVSLAIGLLWFAWTSSPAISPWPQILAGIPIGVGVQVILLQSLAYLIDIYTTGAASAISGTMIVRSLVGGTFPLFAPQMYRKFGVSIAVLIIQ</sequence>
<proteinExistence type="evidence at transcript level"/>
<dbReference type="EMBL" id="CH476597">
    <property type="protein sequence ID" value="EAU36710.1"/>
    <property type="molecule type" value="Genomic_DNA"/>
</dbReference>
<dbReference type="RefSeq" id="XP_001212614.1">
    <property type="nucleotide sequence ID" value="XM_001212614.1"/>
</dbReference>
<dbReference type="STRING" id="341663.Q0CS98"/>
<dbReference type="EnsemblFungi" id="EAU36710">
    <property type="protein sequence ID" value="EAU36710"/>
    <property type="gene ID" value="ATEG_03436"/>
</dbReference>
<dbReference type="GeneID" id="4318031"/>
<dbReference type="VEuPathDB" id="FungiDB:ATEG_03436"/>
<dbReference type="eggNOG" id="KOG0255">
    <property type="taxonomic scope" value="Eukaryota"/>
</dbReference>
<dbReference type="HOGENOM" id="CLU_008455_11_0_1"/>
<dbReference type="OMA" id="KWVITIM"/>
<dbReference type="OrthoDB" id="446368at2759"/>
<dbReference type="Proteomes" id="UP000007963">
    <property type="component" value="Unassembled WGS sequence"/>
</dbReference>
<dbReference type="GO" id="GO:0005886">
    <property type="term" value="C:plasma membrane"/>
    <property type="evidence" value="ECO:0007669"/>
    <property type="project" value="TreeGrafter"/>
</dbReference>
<dbReference type="GO" id="GO:0022857">
    <property type="term" value="F:transmembrane transporter activity"/>
    <property type="evidence" value="ECO:0007669"/>
    <property type="project" value="InterPro"/>
</dbReference>
<dbReference type="GO" id="GO:0140115">
    <property type="term" value="P:export across plasma membrane"/>
    <property type="evidence" value="ECO:0007669"/>
    <property type="project" value="UniProtKB-ARBA"/>
</dbReference>
<dbReference type="GO" id="GO:0042908">
    <property type="term" value="P:xenobiotic transport"/>
    <property type="evidence" value="ECO:0007669"/>
    <property type="project" value="UniProtKB-ARBA"/>
</dbReference>
<dbReference type="Gene3D" id="1.20.1250.20">
    <property type="entry name" value="MFS general substrate transporter like domains"/>
    <property type="match status" value="1"/>
</dbReference>
<dbReference type="InterPro" id="IPR011701">
    <property type="entry name" value="MFS"/>
</dbReference>
<dbReference type="InterPro" id="IPR020846">
    <property type="entry name" value="MFS_dom"/>
</dbReference>
<dbReference type="InterPro" id="IPR036259">
    <property type="entry name" value="MFS_trans_sf"/>
</dbReference>
<dbReference type="InterPro" id="IPR005829">
    <property type="entry name" value="Sugar_transporter_CS"/>
</dbReference>
<dbReference type="PANTHER" id="PTHR23502">
    <property type="entry name" value="MAJOR FACILITATOR SUPERFAMILY"/>
    <property type="match status" value="1"/>
</dbReference>
<dbReference type="PANTHER" id="PTHR23502:SF47">
    <property type="entry name" value="MAJOR FACILITATOR SUPERFAMILY (MFS) PROFILE DOMAIN-CONTAINING PROTEIN-RELATED"/>
    <property type="match status" value="1"/>
</dbReference>
<dbReference type="Pfam" id="PF07690">
    <property type="entry name" value="MFS_1"/>
    <property type="match status" value="1"/>
</dbReference>
<dbReference type="SUPFAM" id="SSF103473">
    <property type="entry name" value="MFS general substrate transporter"/>
    <property type="match status" value="1"/>
</dbReference>
<dbReference type="PROSITE" id="PS50850">
    <property type="entry name" value="MFS"/>
    <property type="match status" value="1"/>
</dbReference>
<dbReference type="PROSITE" id="PS00216">
    <property type="entry name" value="SUGAR_TRANSPORT_1"/>
    <property type="match status" value="1"/>
</dbReference>
<keyword id="KW-0472">Membrane</keyword>
<keyword id="KW-1185">Reference proteome</keyword>
<keyword id="KW-0812">Transmembrane</keyword>
<keyword id="KW-1133">Transmembrane helix</keyword>
<keyword id="KW-0813">Transport</keyword>
<reference key="1">
    <citation type="submission" date="2005-09" db="EMBL/GenBank/DDBJ databases">
        <title>Annotation of the Aspergillus terreus NIH2624 genome.</title>
        <authorList>
            <person name="Birren B.W."/>
            <person name="Lander E.S."/>
            <person name="Galagan J.E."/>
            <person name="Nusbaum C."/>
            <person name="Devon K."/>
            <person name="Henn M."/>
            <person name="Ma L.-J."/>
            <person name="Jaffe D.B."/>
            <person name="Butler J."/>
            <person name="Alvarez P."/>
            <person name="Gnerre S."/>
            <person name="Grabherr M."/>
            <person name="Kleber M."/>
            <person name="Mauceli E.W."/>
            <person name="Brockman W."/>
            <person name="Rounsley S."/>
            <person name="Young S.K."/>
            <person name="LaButti K."/>
            <person name="Pushparaj V."/>
            <person name="DeCaprio D."/>
            <person name="Crawford M."/>
            <person name="Koehrsen M."/>
            <person name="Engels R."/>
            <person name="Montgomery P."/>
            <person name="Pearson M."/>
            <person name="Howarth C."/>
            <person name="Larson L."/>
            <person name="Luoma S."/>
            <person name="White J."/>
            <person name="Alvarado L."/>
            <person name="Kodira C.D."/>
            <person name="Zeng Q."/>
            <person name="Oleary S."/>
            <person name="Yandava C."/>
            <person name="Denning D.W."/>
            <person name="Nierman W.C."/>
            <person name="Milne T."/>
            <person name="Madden K."/>
        </authorList>
    </citation>
    <scope>NUCLEOTIDE SEQUENCE [LARGE SCALE GENOMIC DNA]</scope>
    <source>
        <strain>NIH 2624 / FGSC A1156</strain>
    </source>
</reference>
<reference key="2">
    <citation type="journal article" date="2022" name="Fungal Genet. Biol.">
        <title>Characterization of a silent azaphilone biosynthesis gene cluster in Aspergillus terreus NIH 2624.</title>
        <authorList>
            <person name="Sun W.W."/>
            <person name="Li C.Y."/>
            <person name="Chiang Y.M."/>
            <person name="Lin T.S."/>
            <person name="Warren S."/>
            <person name="Chang F.R."/>
            <person name="Wang C.C.C."/>
        </authorList>
    </citation>
    <scope>FUNCTION</scope>
    <scope>INDUCTION</scope>
    <scope>PATHWAY</scope>
</reference>
<gene>
    <name evidence="3" type="primary">tazK</name>
    <name type="ORF">ATEG_03436</name>
</gene>
<organism>
    <name type="scientific">Aspergillus terreus (strain NIH 2624 / FGSC A1156)</name>
    <dbReference type="NCBI Taxonomy" id="341663"/>
    <lineage>
        <taxon>Eukaryota</taxon>
        <taxon>Fungi</taxon>
        <taxon>Dikarya</taxon>
        <taxon>Ascomycota</taxon>
        <taxon>Pezizomycotina</taxon>
        <taxon>Eurotiomycetes</taxon>
        <taxon>Eurotiomycetidae</taxon>
        <taxon>Eurotiales</taxon>
        <taxon>Aspergillaceae</taxon>
        <taxon>Aspergillus</taxon>
        <taxon>Aspergillus subgen. Circumdati</taxon>
    </lineage>
</organism>
<comment type="function">
    <text evidence="2">MFS-type transporter; part of the gene cluster that mediates the biosynthesis of azaterrilone A and other azaphilones, a class of fungal metabolites characterized by a highly oxygenated pyrano-quinone bicyclic core and exhibiting a broad range of bioactivities.</text>
</comment>
<comment type="subcellular location">
    <subcellularLocation>
        <location evidence="1">Membrane</location>
        <topology evidence="1">Multi-pass membrane protein</topology>
    </subcellularLocation>
</comment>
<comment type="induction">
    <text evidence="2">Expression is positively regulated by the azaterrilone A cluster-specific transcription factor tazR.</text>
</comment>
<comment type="similarity">
    <text evidence="1">Belongs to the major facilitator superfamily. CAR1 family.</text>
</comment>
<evidence type="ECO:0000255" key="1"/>
<evidence type="ECO:0000269" key="2">
    <source>
    </source>
</evidence>
<evidence type="ECO:0000303" key="3">
    <source>
    </source>
</evidence>
<name>TAZK_ASPTN</name>
<accession>Q0CS98</accession>
<feature type="chain" id="PRO_0000456068" description="MFS-type transporter tazK">
    <location>
        <begin position="1"/>
        <end position="356"/>
    </location>
</feature>
<feature type="transmembrane region" description="Helical" evidence="1">
    <location>
        <begin position="12"/>
        <end position="32"/>
    </location>
</feature>
<feature type="transmembrane region" description="Helical" evidence="1">
    <location>
        <begin position="42"/>
        <end position="62"/>
    </location>
</feature>
<feature type="transmembrane region" description="Helical" evidence="1">
    <location>
        <begin position="69"/>
        <end position="89"/>
    </location>
</feature>
<feature type="transmembrane region" description="Helical" evidence="1">
    <location>
        <begin position="102"/>
        <end position="122"/>
    </location>
</feature>
<feature type="transmembrane region" description="Helical" evidence="1">
    <location>
        <begin position="178"/>
        <end position="198"/>
    </location>
</feature>
<feature type="transmembrane region" description="Helical" evidence="1">
    <location>
        <begin position="211"/>
        <end position="231"/>
    </location>
</feature>
<feature type="transmembrane region" description="Helical" evidence="1">
    <location>
        <begin position="257"/>
        <end position="277"/>
    </location>
</feature>
<feature type="transmembrane region" description="Helical" evidence="1">
    <location>
        <begin position="288"/>
        <end position="308"/>
    </location>
</feature>
<feature type="transmembrane region" description="Helical" evidence="1">
    <location>
        <begin position="320"/>
        <end position="340"/>
    </location>
</feature>
<protein>
    <recommendedName>
        <fullName evidence="3">MFS-type transporter tazK</fullName>
    </recommendedName>
    <alternativeName>
        <fullName evidence="3">Azaphilone biosynthesis cluster protein K</fullName>
    </alternativeName>
</protein>